<organism>
    <name type="scientific">Drosophila willistoni</name>
    <name type="common">Fruit fly</name>
    <dbReference type="NCBI Taxonomy" id="7260"/>
    <lineage>
        <taxon>Eukaryota</taxon>
        <taxon>Metazoa</taxon>
        <taxon>Ecdysozoa</taxon>
        <taxon>Arthropoda</taxon>
        <taxon>Hexapoda</taxon>
        <taxon>Insecta</taxon>
        <taxon>Pterygota</taxon>
        <taxon>Neoptera</taxon>
        <taxon>Endopterygota</taxon>
        <taxon>Diptera</taxon>
        <taxon>Brachycera</taxon>
        <taxon>Muscomorpha</taxon>
        <taxon>Ephydroidea</taxon>
        <taxon>Drosophilidae</taxon>
        <taxon>Drosophila</taxon>
        <taxon>Sophophora</taxon>
    </lineage>
</organism>
<keyword id="KW-1185">Reference proteome</keyword>
<gene>
    <name type="ORF">GK20175</name>
</gene>
<proteinExistence type="inferred from homology"/>
<comment type="similarity">
    <text evidence="2">Belongs to the SOSS-C family.</text>
</comment>
<reference key="1">
    <citation type="journal article" date="2007" name="Nature">
        <title>Evolution of genes and genomes on the Drosophila phylogeny.</title>
        <authorList>
            <consortium name="Drosophila 12 genomes consortium"/>
        </authorList>
    </citation>
    <scope>NUCLEOTIDE SEQUENCE [LARGE SCALE GENOMIC DNA]</scope>
    <source>
        <strain>Tucson 14030-0811.24</strain>
    </source>
</reference>
<name>SOSCB_DROWI</name>
<accession>B4MXH8</accession>
<feature type="chain" id="PRO_0000385329" description="SOSS complex subunit C homolog B">
    <location>
        <begin position="1"/>
        <end position="125"/>
    </location>
</feature>
<feature type="region of interest" description="Disordered" evidence="1">
    <location>
        <begin position="44"/>
        <end position="73"/>
    </location>
</feature>
<feature type="region of interest" description="Disordered" evidence="1">
    <location>
        <begin position="105"/>
        <end position="125"/>
    </location>
</feature>
<evidence type="ECO:0000256" key="1">
    <source>
        <dbReference type="SAM" id="MobiDB-lite"/>
    </source>
</evidence>
<evidence type="ECO:0000305" key="2"/>
<sequence length="125" mass="13242">MAFPNTSAQQAETNRKILEEIQTKKQLLAGGIINLGLSNTNQMPAPQLLGQPTTTTATPDLVSTNSTPPRAAFNPTSSTTLGFFIPQDSYFGNSLIPVLPRLELPATPSTTTPPITPIANANNPK</sequence>
<protein>
    <recommendedName>
        <fullName>SOSS complex subunit C homolog B</fullName>
    </recommendedName>
</protein>
<dbReference type="EMBL" id="CH963876">
    <property type="protein sequence ID" value="EDW76747.1"/>
    <property type="molecule type" value="Genomic_DNA"/>
</dbReference>
<dbReference type="SMR" id="B4MXH8"/>
<dbReference type="STRING" id="7260.B4MXH8"/>
<dbReference type="EnsemblMetazoa" id="FBtr0250826">
    <property type="protein sequence ID" value="FBpp0249318"/>
    <property type="gene ID" value="FBgn0222172"/>
</dbReference>
<dbReference type="EnsemblMetazoa" id="XM_002065725.4">
    <property type="protein sequence ID" value="XP_002065761.1"/>
    <property type="gene ID" value="LOC6643096"/>
</dbReference>
<dbReference type="GeneID" id="6643096"/>
<dbReference type="KEGG" id="dwi:6643096"/>
<dbReference type="eggNOG" id="KOG3420">
    <property type="taxonomic scope" value="Eukaryota"/>
</dbReference>
<dbReference type="HOGENOM" id="CLU_145773_0_0_1"/>
<dbReference type="OMA" id="VMETQHM"/>
<dbReference type="OrthoDB" id="419617at2759"/>
<dbReference type="PhylomeDB" id="B4MXH8"/>
<dbReference type="Proteomes" id="UP000007798">
    <property type="component" value="Unassembled WGS sequence"/>
</dbReference>
<dbReference type="GO" id="GO:0005654">
    <property type="term" value="C:nucleoplasm"/>
    <property type="evidence" value="ECO:0007669"/>
    <property type="project" value="TreeGrafter"/>
</dbReference>
<dbReference type="GO" id="GO:0070876">
    <property type="term" value="C:SOSS complex"/>
    <property type="evidence" value="ECO:0007669"/>
    <property type="project" value="InterPro"/>
</dbReference>
<dbReference type="GO" id="GO:0006281">
    <property type="term" value="P:DNA repair"/>
    <property type="evidence" value="ECO:0007669"/>
    <property type="project" value="InterPro"/>
</dbReference>
<dbReference type="InterPro" id="IPR031821">
    <property type="entry name" value="SOSSC"/>
</dbReference>
<dbReference type="PANTHER" id="PTHR31526">
    <property type="entry name" value="SOSS COMPLEX SUBUNIT C"/>
    <property type="match status" value="1"/>
</dbReference>
<dbReference type="PANTHER" id="PTHR31526:SF2">
    <property type="entry name" value="SOSS COMPLEX SUBUNIT C"/>
    <property type="match status" value="1"/>
</dbReference>
<dbReference type="Pfam" id="PF15925">
    <property type="entry name" value="SOSSC"/>
    <property type="match status" value="1"/>
</dbReference>